<sequence length="200" mass="21868">MELMVKGANALTVSETTFGREFNEALVHQVVVAYAAGARQGTRAQKTRSEVSGGGAKPWRQKGTGRARAGTIRSPIWRTGGVTFAAKPQDHSQKVNKKMYRGAMKSILSELVRQERLIVVENFSVEAPKTKALVAKLKELELNDVLIVTGEVDENLFLAARNLYKVDVRDVTGIDPVSLIAFDKVLMTAAAVKQVEEMLA</sequence>
<organism>
    <name type="scientific">Vibrio cholerae serotype O1 (strain ATCC 39315 / El Tor Inaba N16961)</name>
    <dbReference type="NCBI Taxonomy" id="243277"/>
    <lineage>
        <taxon>Bacteria</taxon>
        <taxon>Pseudomonadati</taxon>
        <taxon>Pseudomonadota</taxon>
        <taxon>Gammaproteobacteria</taxon>
        <taxon>Vibrionales</taxon>
        <taxon>Vibrionaceae</taxon>
        <taxon>Vibrio</taxon>
    </lineage>
</organism>
<dbReference type="EMBL" id="AE003852">
    <property type="protein sequence ID" value="AAF95736.1"/>
    <property type="molecule type" value="Genomic_DNA"/>
</dbReference>
<dbReference type="PIR" id="E82059">
    <property type="entry name" value="E82059"/>
</dbReference>
<dbReference type="RefSeq" id="NP_232223.1">
    <property type="nucleotide sequence ID" value="NC_002505.1"/>
</dbReference>
<dbReference type="RefSeq" id="WP_000422344.1">
    <property type="nucleotide sequence ID" value="NZ_LT906614.1"/>
</dbReference>
<dbReference type="SMR" id="Q9KNY5"/>
<dbReference type="STRING" id="243277.VC_2595"/>
<dbReference type="DNASU" id="2615612"/>
<dbReference type="EnsemblBacteria" id="AAF95736">
    <property type="protein sequence ID" value="AAF95736"/>
    <property type="gene ID" value="VC_2595"/>
</dbReference>
<dbReference type="GeneID" id="94012753"/>
<dbReference type="KEGG" id="vch:VC_2595"/>
<dbReference type="PATRIC" id="fig|243277.26.peg.2474"/>
<dbReference type="eggNOG" id="COG0088">
    <property type="taxonomic scope" value="Bacteria"/>
</dbReference>
<dbReference type="HOGENOM" id="CLU_041575_5_2_6"/>
<dbReference type="Proteomes" id="UP000000584">
    <property type="component" value="Chromosome 1"/>
</dbReference>
<dbReference type="GO" id="GO:1990904">
    <property type="term" value="C:ribonucleoprotein complex"/>
    <property type="evidence" value="ECO:0007669"/>
    <property type="project" value="UniProtKB-KW"/>
</dbReference>
<dbReference type="GO" id="GO:0005840">
    <property type="term" value="C:ribosome"/>
    <property type="evidence" value="ECO:0007669"/>
    <property type="project" value="UniProtKB-KW"/>
</dbReference>
<dbReference type="GO" id="GO:0019843">
    <property type="term" value="F:rRNA binding"/>
    <property type="evidence" value="ECO:0007669"/>
    <property type="project" value="UniProtKB-UniRule"/>
</dbReference>
<dbReference type="GO" id="GO:0003735">
    <property type="term" value="F:structural constituent of ribosome"/>
    <property type="evidence" value="ECO:0000318"/>
    <property type="project" value="GO_Central"/>
</dbReference>
<dbReference type="GO" id="GO:0006353">
    <property type="term" value="P:DNA-templated transcription termination"/>
    <property type="evidence" value="ECO:0007669"/>
    <property type="project" value="UniProtKB-KW"/>
</dbReference>
<dbReference type="GO" id="GO:0006417">
    <property type="term" value="P:regulation of translation"/>
    <property type="evidence" value="ECO:0007669"/>
    <property type="project" value="UniProtKB-KW"/>
</dbReference>
<dbReference type="GO" id="GO:0006412">
    <property type="term" value="P:translation"/>
    <property type="evidence" value="ECO:0007669"/>
    <property type="project" value="UniProtKB-UniRule"/>
</dbReference>
<dbReference type="FunFam" id="3.40.1370.10:FF:000001">
    <property type="entry name" value="50S ribosomal protein L4"/>
    <property type="match status" value="1"/>
</dbReference>
<dbReference type="Gene3D" id="3.40.1370.10">
    <property type="match status" value="1"/>
</dbReference>
<dbReference type="HAMAP" id="MF_01328_B">
    <property type="entry name" value="Ribosomal_uL4_B"/>
    <property type="match status" value="1"/>
</dbReference>
<dbReference type="InterPro" id="IPR002136">
    <property type="entry name" value="Ribosomal_uL4"/>
</dbReference>
<dbReference type="InterPro" id="IPR013005">
    <property type="entry name" value="Ribosomal_uL4-like"/>
</dbReference>
<dbReference type="InterPro" id="IPR023574">
    <property type="entry name" value="Ribosomal_uL4_dom_sf"/>
</dbReference>
<dbReference type="NCBIfam" id="TIGR03953">
    <property type="entry name" value="rplD_bact"/>
    <property type="match status" value="1"/>
</dbReference>
<dbReference type="PANTHER" id="PTHR10746">
    <property type="entry name" value="50S RIBOSOMAL PROTEIN L4"/>
    <property type="match status" value="1"/>
</dbReference>
<dbReference type="PANTHER" id="PTHR10746:SF6">
    <property type="entry name" value="LARGE RIBOSOMAL SUBUNIT PROTEIN UL4M"/>
    <property type="match status" value="1"/>
</dbReference>
<dbReference type="Pfam" id="PF00573">
    <property type="entry name" value="Ribosomal_L4"/>
    <property type="match status" value="1"/>
</dbReference>
<dbReference type="SUPFAM" id="SSF52166">
    <property type="entry name" value="Ribosomal protein L4"/>
    <property type="match status" value="1"/>
</dbReference>
<reference key="1">
    <citation type="journal article" date="2000" name="Nature">
        <title>DNA sequence of both chromosomes of the cholera pathogen Vibrio cholerae.</title>
        <authorList>
            <person name="Heidelberg J.F."/>
            <person name="Eisen J.A."/>
            <person name="Nelson W.C."/>
            <person name="Clayton R.A."/>
            <person name="Gwinn M.L."/>
            <person name="Dodson R.J."/>
            <person name="Haft D.H."/>
            <person name="Hickey E.K."/>
            <person name="Peterson J.D."/>
            <person name="Umayam L.A."/>
            <person name="Gill S.R."/>
            <person name="Nelson K.E."/>
            <person name="Read T.D."/>
            <person name="Tettelin H."/>
            <person name="Richardson D.L."/>
            <person name="Ermolaeva M.D."/>
            <person name="Vamathevan J.J."/>
            <person name="Bass S."/>
            <person name="Qin H."/>
            <person name="Dragoi I."/>
            <person name="Sellers P."/>
            <person name="McDonald L.A."/>
            <person name="Utterback T.R."/>
            <person name="Fleischmann R.D."/>
            <person name="Nierman W.C."/>
            <person name="White O."/>
            <person name="Salzberg S.L."/>
            <person name="Smith H.O."/>
            <person name="Colwell R.R."/>
            <person name="Mekalanos J.J."/>
            <person name="Venter J.C."/>
            <person name="Fraser C.M."/>
        </authorList>
    </citation>
    <scope>NUCLEOTIDE SEQUENCE [LARGE SCALE GENOMIC DNA]</scope>
    <source>
        <strain>ATCC 39315 / El Tor Inaba N16961</strain>
    </source>
</reference>
<reference key="2">
    <citation type="journal article" date="1999" name="J. Bacteriol.">
        <title>Phylogenetic analysis of L4-mediated autogenous control of the S10 ribosomal protein operon.</title>
        <authorList>
            <person name="Allen T."/>
            <person name="Shen P."/>
            <person name="Samsel L."/>
            <person name="Liu R."/>
            <person name="Lindahl L."/>
            <person name="Zengel J.M."/>
        </authorList>
    </citation>
    <scope>CAN REGULATE THE E.COLI S10 OPERON</scope>
</reference>
<feature type="chain" id="PRO_0000129308" description="Large ribosomal subunit protein uL4">
    <location>
        <begin position="1"/>
        <end position="200"/>
    </location>
</feature>
<feature type="region of interest" description="Disordered" evidence="2">
    <location>
        <begin position="42"/>
        <end position="65"/>
    </location>
</feature>
<protein>
    <recommendedName>
        <fullName evidence="3">Large ribosomal subunit protein uL4</fullName>
    </recommendedName>
    <alternativeName>
        <fullName>50S ribosomal protein L4</fullName>
    </alternativeName>
</protein>
<keyword id="KW-1185">Reference proteome</keyword>
<keyword id="KW-0678">Repressor</keyword>
<keyword id="KW-0687">Ribonucleoprotein</keyword>
<keyword id="KW-0689">Ribosomal protein</keyword>
<keyword id="KW-0694">RNA-binding</keyword>
<keyword id="KW-0699">rRNA-binding</keyword>
<keyword id="KW-0804">Transcription</keyword>
<keyword id="KW-0805">Transcription regulation</keyword>
<keyword id="KW-0806">Transcription termination</keyword>
<keyword id="KW-0810">Translation regulation</keyword>
<evidence type="ECO:0000250" key="1"/>
<evidence type="ECO:0000256" key="2">
    <source>
        <dbReference type="SAM" id="MobiDB-lite"/>
    </source>
</evidence>
<evidence type="ECO:0000305" key="3"/>
<name>RL4_VIBCH</name>
<comment type="function">
    <text evidence="1">One of the primary rRNA binding proteins, this protein initially binds near the 5'-end of the 23S rRNA. It is important during the early stages of 50S assembly. It makes multiple contacts with different domains of the 23S rRNA in the assembled 50S subunit and ribosome (By similarity).</text>
</comment>
<comment type="function">
    <text evidence="1">Protein L4 is a both a transcriptional repressor and a translational repressor protein. It regulates transcription of the S10 operon (to which L4 belongs) by causing premature termination of transcription within the S10 leader. L4 controls the translation of the S10 operon by binding to its mRNA (By similarity).</text>
</comment>
<comment type="function">
    <text>As the V.cholerae S10 leader can be regulated in vitro by the E.coli L4 protein this suggests the endogenous protein controls its own S10 operon in a similar fashion.</text>
</comment>
<comment type="function">
    <text evidence="1">Forms part of the polypeptide exit tunnel.</text>
</comment>
<comment type="subunit">
    <text evidence="1">Part of the 50S ribosomal subunit.</text>
</comment>
<comment type="similarity">
    <text evidence="3">Belongs to the universal ribosomal protein uL4 family.</text>
</comment>
<accession>Q9KNY5</accession>
<proteinExistence type="inferred from homology"/>
<gene>
    <name type="primary">rplD</name>
    <name type="ordered locus">VC_2595</name>
</gene>